<feature type="chain" id="PRO_0000248307" description="Protein NorD">
    <location>
        <begin position="1"/>
        <end position="633"/>
    </location>
</feature>
<feature type="domain" description="VWFA" evidence="1">
    <location>
        <begin position="445"/>
        <end position="631"/>
    </location>
</feature>
<feature type="region of interest" description="Disordered" evidence="2">
    <location>
        <begin position="232"/>
        <end position="270"/>
    </location>
</feature>
<feature type="region of interest" description="Disordered" evidence="2">
    <location>
        <begin position="290"/>
        <end position="314"/>
    </location>
</feature>
<feature type="compositionally biased region" description="Basic and acidic residues" evidence="2">
    <location>
        <begin position="232"/>
        <end position="243"/>
    </location>
</feature>
<feature type="compositionally biased region" description="Basic and acidic residues" evidence="2">
    <location>
        <begin position="258"/>
        <end position="270"/>
    </location>
</feature>
<feature type="compositionally biased region" description="Basic and acidic residues" evidence="2">
    <location>
        <begin position="292"/>
        <end position="306"/>
    </location>
</feature>
<proteinExistence type="predicted"/>
<sequence length="633" mass="70684">MLDFLELEETVGRAWHRLIGKTGSWPQYPDHAVQLVDIRQRLAICFRGFGGDIAVQIAPARARTSTHRLGLRRRMALGEEKLAQPLRDEATLMLPPEIALFPDRQLNYDLYVWLVGYMAVMPMDADALPEDALRRDLAALQIAEQTVERACRAFPGLKPRYKRLCAAILAERPKRPLHRLEQQVEARILSLLKQGADLPDDALPTIFPHRGPAGYLPALPVPLWPGLMKREEVAPRTGEDEPVRNSQSEGAETGRQIAQRERQDPRHADRSPFILNRFEKILAMAEMVSVDRPSDDSDEQNAKSADELDDLTLGERKGRPAARFRFDLDLPPEAVDRSLLTAELTYPEWDYRKGAYLPDHCAVLAAPVQEKEKPLELDAAAQSLVRRVRRQFEILRPGREVLRAQLDGTDLDLDAVVRSRCDLAAGGQGSDRVHLMSRPQANDLAVTLLVDVSLSTDAWVDNRRVLDVEKEALLVLANGIAACGDRCSILTFTSRRRSWVRVETVKDFDESFGPTVEHRIAALKPGFYTRMGAAMRHATAKLAEQPNRKKLLLLLTDGKPNDVDHYEGRFALEDSRRAAGEARAKGVNVFAVTVDREASAHLPALFGRGGYALVANLAKLPVALPAIYRMLAG</sequence>
<name>NORD_BRUSU</name>
<gene>
    <name type="primary">norD</name>
    <name type="ordered locus">BRA0251</name>
    <name type="ordered locus">BS1330_II0248</name>
</gene>
<evidence type="ECO:0000255" key="1">
    <source>
        <dbReference type="PROSITE-ProRule" id="PRU00219"/>
    </source>
</evidence>
<evidence type="ECO:0000256" key="2">
    <source>
        <dbReference type="SAM" id="MobiDB-lite"/>
    </source>
</evidence>
<evidence type="ECO:0000269" key="3">
    <source>
    </source>
</evidence>
<comment type="function">
    <text evidence="3">Part of the operon norEFCBQD encoding nitric oxide reductase. Essential virulence factor, probably involved in the detoxification of nitric oxide (NO) produced in the macrophages during the innate response against infection.</text>
</comment>
<keyword id="KW-0843">Virulence</keyword>
<accession>Q8FX38</accession>
<accession>G0KF87</accession>
<protein>
    <recommendedName>
        <fullName>Protein NorD</fullName>
    </recommendedName>
</protein>
<dbReference type="EMBL" id="AE014292">
    <property type="protein sequence ID" value="AAN33453.1"/>
    <property type="molecule type" value="Genomic_DNA"/>
</dbReference>
<dbReference type="EMBL" id="CP002998">
    <property type="protein sequence ID" value="AEM19731.1"/>
    <property type="molecule type" value="Genomic_DNA"/>
</dbReference>
<dbReference type="RefSeq" id="WP_006191744.1">
    <property type="nucleotide sequence ID" value="NZ_KN046805.1"/>
</dbReference>
<dbReference type="SMR" id="Q8FX38"/>
<dbReference type="GeneID" id="45053321"/>
<dbReference type="KEGG" id="bms:BRA0251"/>
<dbReference type="KEGG" id="bsi:BS1330_II0248"/>
<dbReference type="PATRIC" id="fig|204722.21.peg.2726"/>
<dbReference type="HOGENOM" id="CLU_024042_0_0_5"/>
<dbReference type="PhylomeDB" id="Q8FX38"/>
<dbReference type="PRO" id="PR:Q8FX38"/>
<dbReference type="Proteomes" id="UP000007104">
    <property type="component" value="Chromosome II"/>
</dbReference>
<dbReference type="CDD" id="cd01454">
    <property type="entry name" value="vWA_norD_type"/>
    <property type="match status" value="1"/>
</dbReference>
<dbReference type="Gene3D" id="3.40.50.410">
    <property type="entry name" value="von Willebrand factor, type A domain"/>
    <property type="match status" value="1"/>
</dbReference>
<dbReference type="InterPro" id="IPR051928">
    <property type="entry name" value="NorD/CobT"/>
</dbReference>
<dbReference type="InterPro" id="IPR002035">
    <property type="entry name" value="VWF_A"/>
</dbReference>
<dbReference type="InterPro" id="IPR036465">
    <property type="entry name" value="vWFA_dom_sf"/>
</dbReference>
<dbReference type="PANTHER" id="PTHR41248">
    <property type="entry name" value="NORD PROTEIN"/>
    <property type="match status" value="1"/>
</dbReference>
<dbReference type="PANTHER" id="PTHR41248:SF1">
    <property type="entry name" value="NORD PROTEIN"/>
    <property type="match status" value="1"/>
</dbReference>
<dbReference type="Pfam" id="PF00092">
    <property type="entry name" value="VWA"/>
    <property type="match status" value="1"/>
</dbReference>
<dbReference type="SMART" id="SM00327">
    <property type="entry name" value="VWA"/>
    <property type="match status" value="1"/>
</dbReference>
<dbReference type="SUPFAM" id="SSF53300">
    <property type="entry name" value="vWA-like"/>
    <property type="match status" value="1"/>
</dbReference>
<dbReference type="PROSITE" id="PS50234">
    <property type="entry name" value="VWFA"/>
    <property type="match status" value="1"/>
</dbReference>
<organism>
    <name type="scientific">Brucella suis biovar 1 (strain 1330)</name>
    <dbReference type="NCBI Taxonomy" id="204722"/>
    <lineage>
        <taxon>Bacteria</taxon>
        <taxon>Pseudomonadati</taxon>
        <taxon>Pseudomonadota</taxon>
        <taxon>Alphaproteobacteria</taxon>
        <taxon>Hyphomicrobiales</taxon>
        <taxon>Brucellaceae</taxon>
        <taxon>Brucella/Ochrobactrum group</taxon>
        <taxon>Brucella</taxon>
    </lineage>
</organism>
<reference key="1">
    <citation type="journal article" date="2002" name="Proc. Natl. Acad. Sci. U.S.A.">
        <title>The Brucella suis genome reveals fundamental similarities between animal and plant pathogens and symbionts.</title>
        <authorList>
            <person name="Paulsen I.T."/>
            <person name="Seshadri R."/>
            <person name="Nelson K.E."/>
            <person name="Eisen J.A."/>
            <person name="Heidelberg J.F."/>
            <person name="Read T.D."/>
            <person name="Dodson R.J."/>
            <person name="Umayam L.A."/>
            <person name="Brinkac L.M."/>
            <person name="Beanan M.J."/>
            <person name="Daugherty S.C."/>
            <person name="DeBoy R.T."/>
            <person name="Durkin A.S."/>
            <person name="Kolonay J.F."/>
            <person name="Madupu R."/>
            <person name="Nelson W.C."/>
            <person name="Ayodeji B."/>
            <person name="Kraul M."/>
            <person name="Shetty J."/>
            <person name="Malek J.A."/>
            <person name="Van Aken S.E."/>
            <person name="Riedmuller S."/>
            <person name="Tettelin H."/>
            <person name="Gill S.R."/>
            <person name="White O."/>
            <person name="Salzberg S.L."/>
            <person name="Hoover D.L."/>
            <person name="Lindler L.E."/>
            <person name="Halling S.M."/>
            <person name="Boyle S.M."/>
            <person name="Fraser C.M."/>
        </authorList>
    </citation>
    <scope>NUCLEOTIDE SEQUENCE [LARGE SCALE GENOMIC DNA]</scope>
    <source>
        <strain>1330</strain>
    </source>
</reference>
<reference key="2">
    <citation type="journal article" date="2011" name="J. Bacteriol.">
        <title>Revised genome sequence of Brucella suis 1330.</title>
        <authorList>
            <person name="Tae H."/>
            <person name="Shallom S."/>
            <person name="Settlage R."/>
            <person name="Preston D."/>
            <person name="Adams L.G."/>
            <person name="Garner H.R."/>
        </authorList>
    </citation>
    <scope>NUCLEOTIDE SEQUENCE [LARGE SCALE GENOMIC DNA]</scope>
    <source>
        <strain>1330</strain>
    </source>
</reference>
<reference key="3">
    <citation type="journal article" date="2006" name="Infect. Immun.">
        <title>Requirement of norD for Brucella suis virulence in a murine model of in vitro and in vivo infection.</title>
        <authorList>
            <person name="Loisel-Meyer S."/>
            <person name="Jimenez de Baguees M.P."/>
            <person name="Basseres E."/>
            <person name="Dornand J."/>
            <person name="Koehler S."/>
            <person name="Liautard J.-P."/>
            <person name="Jubier-Maurin V."/>
        </authorList>
    </citation>
    <scope>FUNCTION</scope>
    <source>
        <strain>1330</strain>
    </source>
</reference>